<protein>
    <recommendedName>
        <fullName>Short neurotoxin 3</fullName>
        <shortName evidence="3">SNTX-3</shortName>
    </recommendedName>
    <alternativeName>
        <fullName>Three-finger toxin</fullName>
        <shortName>3FTx</shortName>
    </alternativeName>
</protein>
<reference key="1">
    <citation type="journal article" date="2007" name="Cell. Mol. Life Sci.">
        <title>Distinct activities of novel neurotoxins from Australian venomous snakes for nicotinic acetylcholine receptors.</title>
        <authorList>
            <person name="St Pierre L."/>
            <person name="Fischer H."/>
            <person name="Adams D.J."/>
            <person name="Schenning M."/>
            <person name="Lavidis N."/>
            <person name="de Jersey J."/>
            <person name="Masci P.P."/>
            <person name="Lavin M.F."/>
        </authorList>
    </citation>
    <scope>NUCLEOTIDE SEQUENCE [MRNA]</scope>
    <source>
        <tissue>Venom gland</tissue>
    </source>
</reference>
<proteinExistence type="inferred from homology"/>
<feature type="signal peptide" evidence="1">
    <location>
        <begin position="1"/>
        <end position="23"/>
    </location>
</feature>
<feature type="chain" id="PRO_5000279915" description="Short neurotoxin 3">
    <location>
        <begin position="24"/>
        <end position="79"/>
    </location>
</feature>
<feature type="disulfide bond" evidence="2">
    <location>
        <begin position="24"/>
        <end position="41"/>
    </location>
</feature>
<feature type="disulfide bond" evidence="2">
    <location>
        <begin position="34"/>
        <end position="59"/>
    </location>
</feature>
<feature type="disulfide bond" evidence="2">
    <location>
        <begin position="63"/>
        <end position="71"/>
    </location>
</feature>
<feature type="disulfide bond" evidence="2">
    <location>
        <begin position="72"/>
        <end position="77"/>
    </location>
</feature>
<organism>
    <name type="scientific">Oxyuranus scutellatus scutellatus</name>
    <name type="common">Australian taipan</name>
    <name type="synonym">Coastal taipan</name>
    <dbReference type="NCBI Taxonomy" id="8667"/>
    <lineage>
        <taxon>Eukaryota</taxon>
        <taxon>Metazoa</taxon>
        <taxon>Chordata</taxon>
        <taxon>Craniata</taxon>
        <taxon>Vertebrata</taxon>
        <taxon>Euteleostomi</taxon>
        <taxon>Lepidosauria</taxon>
        <taxon>Squamata</taxon>
        <taxon>Bifurcata</taxon>
        <taxon>Unidentata</taxon>
        <taxon>Episquamata</taxon>
        <taxon>Toxicofera</taxon>
        <taxon>Serpentes</taxon>
        <taxon>Colubroidea</taxon>
        <taxon>Elapidae</taxon>
        <taxon>Hydrophiinae</taxon>
        <taxon>Oxyuranus</taxon>
    </lineage>
</organism>
<accession>A8HDK2</accession>
<dbReference type="EMBL" id="DQ917507">
    <property type="protein sequence ID" value="ABK63536.1"/>
    <property type="molecule type" value="mRNA"/>
</dbReference>
<dbReference type="SMR" id="A8HDK2"/>
<dbReference type="GO" id="GO:0005576">
    <property type="term" value="C:extracellular region"/>
    <property type="evidence" value="ECO:0007669"/>
    <property type="project" value="UniProtKB-SubCell"/>
</dbReference>
<dbReference type="GO" id="GO:0090729">
    <property type="term" value="F:toxin activity"/>
    <property type="evidence" value="ECO:0007669"/>
    <property type="project" value="UniProtKB-KW"/>
</dbReference>
<dbReference type="CDD" id="cd00206">
    <property type="entry name" value="TFP_snake_toxin"/>
    <property type="match status" value="1"/>
</dbReference>
<dbReference type="Gene3D" id="2.10.60.10">
    <property type="entry name" value="CD59"/>
    <property type="match status" value="1"/>
</dbReference>
<dbReference type="InterPro" id="IPR003571">
    <property type="entry name" value="Snake_3FTx"/>
</dbReference>
<dbReference type="InterPro" id="IPR045860">
    <property type="entry name" value="Snake_toxin-like_sf"/>
</dbReference>
<dbReference type="InterPro" id="IPR054131">
    <property type="entry name" value="Toxin_cobra-type"/>
</dbReference>
<dbReference type="Pfam" id="PF21947">
    <property type="entry name" value="Toxin_cobra-type"/>
    <property type="match status" value="1"/>
</dbReference>
<dbReference type="SUPFAM" id="SSF57302">
    <property type="entry name" value="Snake toxin-like"/>
    <property type="match status" value="1"/>
</dbReference>
<comment type="subcellular location">
    <subcellularLocation>
        <location evidence="1">Secreted</location>
    </subcellularLocation>
</comment>
<comment type="tissue specificity">
    <text evidence="4">Expressed by the venom gland.</text>
</comment>
<comment type="similarity">
    <text evidence="4">Belongs to the three-finger toxin family. Short-chain subfamily.</text>
</comment>
<name>3SX3_OXYSC</name>
<sequence length="79" mass="8877">MKTLLLTLVVMTIVCLDLGYTLTCYMNPSGTMVCKEHETMCYQLIVWTFQYRVLYLKGCTSSCPGGNNRACCSTDLCNN</sequence>
<keyword id="KW-1015">Disulfide bond</keyword>
<keyword id="KW-0964">Secreted</keyword>
<keyword id="KW-0732">Signal</keyword>
<keyword id="KW-0800">Toxin</keyword>
<evidence type="ECO:0000250" key="1"/>
<evidence type="ECO:0000250" key="2">
    <source>
        <dbReference type="UniProtKB" id="P60301"/>
    </source>
</evidence>
<evidence type="ECO:0000303" key="3">
    <source>
    </source>
</evidence>
<evidence type="ECO:0000305" key="4"/>